<sequence>MADIYFVGLGLSKRFLTNASLEVLKGSDVIYADIYTSISCDINEKTLREITGKEIIPATREVLETKEKEIYKLLDSGKNVAIAVVGDPMIATTHVSLATGARARGHRVSVIPGVSVHCYMISRSMLSSYKFGKSVTVTFPVLDKLDYTPYRVIKTNRELGLHTMVYLDLKETGIMTADLALNYLKKMESDIGDKVILDDDLVVIGERLGCADERVRAMKVVDALNQKFGAPPHIIIVPSRNLYEMEVEGLKCLS</sequence>
<evidence type="ECO:0000255" key="1">
    <source>
        <dbReference type="HAMAP-Rule" id="MF_01084"/>
    </source>
</evidence>
<feature type="chain" id="PRO_1000073024" description="Diphthine synthase">
    <location>
        <begin position="1"/>
        <end position="254"/>
    </location>
</feature>
<feature type="binding site" evidence="1">
    <location>
        <position position="11"/>
    </location>
    <ligand>
        <name>S-adenosyl-L-methionine</name>
        <dbReference type="ChEBI" id="CHEBI:59789"/>
    </ligand>
</feature>
<feature type="binding site" evidence="1">
    <location>
        <position position="87"/>
    </location>
    <ligand>
        <name>S-adenosyl-L-methionine</name>
        <dbReference type="ChEBI" id="CHEBI:59789"/>
    </ligand>
</feature>
<feature type="binding site" evidence="1">
    <location>
        <position position="90"/>
    </location>
    <ligand>
        <name>S-adenosyl-L-methionine</name>
        <dbReference type="ChEBI" id="CHEBI:59789"/>
    </ligand>
</feature>
<feature type="binding site" evidence="1">
    <location>
        <begin position="115"/>
        <end position="116"/>
    </location>
    <ligand>
        <name>S-adenosyl-L-methionine</name>
        <dbReference type="ChEBI" id="CHEBI:59789"/>
    </ligand>
</feature>
<feature type="binding site" evidence="1">
    <location>
        <position position="167"/>
    </location>
    <ligand>
        <name>S-adenosyl-L-methionine</name>
        <dbReference type="ChEBI" id="CHEBI:59789"/>
    </ligand>
</feature>
<feature type="binding site" evidence="1">
    <location>
        <position position="208"/>
    </location>
    <ligand>
        <name>S-adenosyl-L-methionine</name>
        <dbReference type="ChEBI" id="CHEBI:59789"/>
    </ligand>
</feature>
<feature type="binding site" evidence="1">
    <location>
        <position position="233"/>
    </location>
    <ligand>
        <name>S-adenosyl-L-methionine</name>
        <dbReference type="ChEBI" id="CHEBI:59789"/>
    </ligand>
</feature>
<reference key="1">
    <citation type="journal article" date="2008" name="Appl. Environ. Microbiol.">
        <title>The genome sequence of the metal-mobilizing, extremely thermoacidophilic archaeon Metallosphaera sedula provides insights into bioleaching-associated metabolism.</title>
        <authorList>
            <person name="Auernik K.S."/>
            <person name="Maezato Y."/>
            <person name="Blum P.H."/>
            <person name="Kelly R.M."/>
        </authorList>
    </citation>
    <scope>NUCLEOTIDE SEQUENCE [LARGE SCALE GENOMIC DNA]</scope>
    <source>
        <strain>ATCC 51363 / DSM 5348 / JCM 9185 / NBRC 15509 / TH2</strain>
    </source>
</reference>
<name>DPHB_METS5</name>
<dbReference type="EC" id="2.1.1.98" evidence="1"/>
<dbReference type="EMBL" id="CP000682">
    <property type="protein sequence ID" value="ABP95890.1"/>
    <property type="molecule type" value="Genomic_DNA"/>
</dbReference>
<dbReference type="RefSeq" id="WP_012021677.1">
    <property type="nucleotide sequence ID" value="NC_009440.1"/>
</dbReference>
<dbReference type="SMR" id="A4YHI8"/>
<dbReference type="STRING" id="399549.Msed_1735"/>
<dbReference type="GeneID" id="91756247"/>
<dbReference type="KEGG" id="mse:Msed_1735"/>
<dbReference type="eggNOG" id="arCOG04161">
    <property type="taxonomic scope" value="Archaea"/>
</dbReference>
<dbReference type="HOGENOM" id="CLU_066040_0_0_2"/>
<dbReference type="UniPathway" id="UPA00559"/>
<dbReference type="Proteomes" id="UP000000242">
    <property type="component" value="Chromosome"/>
</dbReference>
<dbReference type="GO" id="GO:0004164">
    <property type="term" value="F:diphthine synthase activity"/>
    <property type="evidence" value="ECO:0007669"/>
    <property type="project" value="UniProtKB-UniRule"/>
</dbReference>
<dbReference type="GO" id="GO:0032259">
    <property type="term" value="P:methylation"/>
    <property type="evidence" value="ECO:0007669"/>
    <property type="project" value="UniProtKB-KW"/>
</dbReference>
<dbReference type="GO" id="GO:0017183">
    <property type="term" value="P:protein histidyl modification to diphthamide"/>
    <property type="evidence" value="ECO:0007669"/>
    <property type="project" value="UniProtKB-UniRule"/>
</dbReference>
<dbReference type="CDD" id="cd11647">
    <property type="entry name" value="DHP5_DphB"/>
    <property type="match status" value="1"/>
</dbReference>
<dbReference type="Gene3D" id="3.40.1010.10">
    <property type="entry name" value="Cobalt-precorrin-4 Transmethylase, Domain 1"/>
    <property type="match status" value="1"/>
</dbReference>
<dbReference type="Gene3D" id="3.30.950.10">
    <property type="entry name" value="Methyltransferase, Cobalt-precorrin-4 Transmethylase, Domain 2"/>
    <property type="match status" value="1"/>
</dbReference>
<dbReference type="HAMAP" id="MF_01084">
    <property type="entry name" value="Diphthine_synth"/>
    <property type="match status" value="1"/>
</dbReference>
<dbReference type="InterPro" id="IPR000878">
    <property type="entry name" value="4pyrrol_Mease"/>
</dbReference>
<dbReference type="InterPro" id="IPR035996">
    <property type="entry name" value="4pyrrol_Methylase_sf"/>
</dbReference>
<dbReference type="InterPro" id="IPR014777">
    <property type="entry name" value="4pyrrole_Mease_sub1"/>
</dbReference>
<dbReference type="InterPro" id="IPR014776">
    <property type="entry name" value="4pyrrole_Mease_sub2"/>
</dbReference>
<dbReference type="InterPro" id="IPR004551">
    <property type="entry name" value="Dphthn_synthase"/>
</dbReference>
<dbReference type="NCBIfam" id="TIGR00522">
    <property type="entry name" value="dph5"/>
    <property type="match status" value="1"/>
</dbReference>
<dbReference type="PANTHER" id="PTHR10882:SF0">
    <property type="entry name" value="DIPHTHINE METHYL ESTER SYNTHASE"/>
    <property type="match status" value="1"/>
</dbReference>
<dbReference type="PANTHER" id="PTHR10882">
    <property type="entry name" value="DIPHTHINE SYNTHASE"/>
    <property type="match status" value="1"/>
</dbReference>
<dbReference type="Pfam" id="PF00590">
    <property type="entry name" value="TP_methylase"/>
    <property type="match status" value="1"/>
</dbReference>
<dbReference type="PIRSF" id="PIRSF036432">
    <property type="entry name" value="Diphthine_synth"/>
    <property type="match status" value="1"/>
</dbReference>
<dbReference type="SUPFAM" id="SSF53790">
    <property type="entry name" value="Tetrapyrrole methylase"/>
    <property type="match status" value="1"/>
</dbReference>
<gene>
    <name evidence="1" type="primary">dphB</name>
    <name type="ordered locus">Msed_1735</name>
</gene>
<protein>
    <recommendedName>
        <fullName evidence="1">Diphthine synthase</fullName>
        <ecNumber evidence="1">2.1.1.98</ecNumber>
    </recommendedName>
    <alternativeName>
        <fullName evidence="1">Diphthamide biosynthesis methyltransferase</fullName>
    </alternativeName>
</protein>
<organism>
    <name type="scientific">Metallosphaera sedula (strain ATCC 51363 / DSM 5348 / JCM 9185 / NBRC 15509 / TH2)</name>
    <dbReference type="NCBI Taxonomy" id="399549"/>
    <lineage>
        <taxon>Archaea</taxon>
        <taxon>Thermoproteota</taxon>
        <taxon>Thermoprotei</taxon>
        <taxon>Sulfolobales</taxon>
        <taxon>Sulfolobaceae</taxon>
        <taxon>Metallosphaera</taxon>
    </lineage>
</organism>
<comment type="function">
    <text evidence="1">S-adenosyl-L-methionine-dependent methyltransferase that catalyzes the trimethylation of the amino group of the modified target histidine residue in translation elongation factor 2 (EF-2), to form an intermediate called diphthine. The three successive methylation reactions represent the second step of diphthamide biosynthesis.</text>
</comment>
<comment type="catalytic activity">
    <reaction evidence="1">
        <text>2-[(3S)-amino-3-carboxypropyl]-L-histidyl-[translation elongation factor 2] + 3 S-adenosyl-L-methionine = diphthine-[translation elongation factor 2] + 3 S-adenosyl-L-homocysteine + 3 H(+)</text>
        <dbReference type="Rhea" id="RHEA:36415"/>
        <dbReference type="Rhea" id="RHEA-COMP:9749"/>
        <dbReference type="Rhea" id="RHEA-COMP:10172"/>
        <dbReference type="ChEBI" id="CHEBI:15378"/>
        <dbReference type="ChEBI" id="CHEBI:57856"/>
        <dbReference type="ChEBI" id="CHEBI:59789"/>
        <dbReference type="ChEBI" id="CHEBI:73995"/>
        <dbReference type="ChEBI" id="CHEBI:82696"/>
        <dbReference type="EC" id="2.1.1.98"/>
    </reaction>
</comment>
<comment type="pathway">
    <text evidence="1">Protein modification; peptidyl-diphthamide biosynthesis.</text>
</comment>
<comment type="subunit">
    <text evidence="1">Homodimer.</text>
</comment>
<comment type="similarity">
    <text evidence="1">Belongs to the diphthine synthase family.</text>
</comment>
<accession>A4YHI8</accession>
<keyword id="KW-0489">Methyltransferase</keyword>
<keyword id="KW-1185">Reference proteome</keyword>
<keyword id="KW-0949">S-adenosyl-L-methionine</keyword>
<keyword id="KW-0808">Transferase</keyword>
<proteinExistence type="inferred from homology"/>